<protein>
    <recommendedName>
        <fullName>Inhibitory POU protein</fullName>
        <shortName>I-POU</shortName>
    </recommendedName>
    <alternativeName>
        <fullName>Abnormal chemosensory jump 6 protein</fullName>
    </alternativeName>
</protein>
<reference key="1">
    <citation type="journal article" date="1991" name="Nature">
        <title>I-POU: a POU-domain protein that inhibits neuron-specific gene activation.</title>
        <authorList>
            <person name="Treacy M.N."/>
            <person name="He X."/>
            <person name="Rosenfeld M.G."/>
        </authorList>
    </citation>
    <scope>NUCLEOTIDE SEQUENCE [MRNA] (ISOFORM C)</scope>
    <scope>TISSUE SPECIFICITY</scope>
</reference>
<reference key="2">
    <citation type="journal article" date="1999" name="Neuron">
        <title>The odor specificities of a subset of olfactory receptor neurons are governed by Acj6, a POU-domain transcription factor.</title>
        <authorList>
            <person name="Clyne P.J."/>
            <person name="Certel S.J."/>
            <person name="de Bruyne M."/>
            <person name="Zaslavsky L."/>
            <person name="Johnson W.A."/>
            <person name="Carlson J.R."/>
        </authorList>
    </citation>
    <scope>NUCLEOTIDE SEQUENCE [MRNA] (ISOFORM A)</scope>
    <scope>FUNCTION</scope>
    <scope>TISSUE SPECIFICITY</scope>
    <source>
        <strain>Canton-S</strain>
    </source>
</reference>
<reference key="3">
    <citation type="journal article" date="2000" name="Science">
        <title>The genome sequence of Drosophila melanogaster.</title>
        <authorList>
            <person name="Adams M.D."/>
            <person name="Celniker S.E."/>
            <person name="Holt R.A."/>
            <person name="Evans C.A."/>
            <person name="Gocayne J.D."/>
            <person name="Amanatides P.G."/>
            <person name="Scherer S.E."/>
            <person name="Li P.W."/>
            <person name="Hoskins R.A."/>
            <person name="Galle R.F."/>
            <person name="George R.A."/>
            <person name="Lewis S.E."/>
            <person name="Richards S."/>
            <person name="Ashburner M."/>
            <person name="Henderson S.N."/>
            <person name="Sutton G.G."/>
            <person name="Wortman J.R."/>
            <person name="Yandell M.D."/>
            <person name="Zhang Q."/>
            <person name="Chen L.X."/>
            <person name="Brandon R.C."/>
            <person name="Rogers Y.-H.C."/>
            <person name="Blazej R.G."/>
            <person name="Champe M."/>
            <person name="Pfeiffer B.D."/>
            <person name="Wan K.H."/>
            <person name="Doyle C."/>
            <person name="Baxter E.G."/>
            <person name="Helt G."/>
            <person name="Nelson C.R."/>
            <person name="Miklos G.L.G."/>
            <person name="Abril J.F."/>
            <person name="Agbayani A."/>
            <person name="An H.-J."/>
            <person name="Andrews-Pfannkoch C."/>
            <person name="Baldwin D."/>
            <person name="Ballew R.M."/>
            <person name="Basu A."/>
            <person name="Baxendale J."/>
            <person name="Bayraktaroglu L."/>
            <person name="Beasley E.M."/>
            <person name="Beeson K.Y."/>
            <person name="Benos P.V."/>
            <person name="Berman B.P."/>
            <person name="Bhandari D."/>
            <person name="Bolshakov S."/>
            <person name="Borkova D."/>
            <person name="Botchan M.R."/>
            <person name="Bouck J."/>
            <person name="Brokstein P."/>
            <person name="Brottier P."/>
            <person name="Burtis K.C."/>
            <person name="Busam D.A."/>
            <person name="Butler H."/>
            <person name="Cadieu E."/>
            <person name="Center A."/>
            <person name="Chandra I."/>
            <person name="Cherry J.M."/>
            <person name="Cawley S."/>
            <person name="Dahlke C."/>
            <person name="Davenport L.B."/>
            <person name="Davies P."/>
            <person name="de Pablos B."/>
            <person name="Delcher A."/>
            <person name="Deng Z."/>
            <person name="Mays A.D."/>
            <person name="Dew I."/>
            <person name="Dietz S.M."/>
            <person name="Dodson K."/>
            <person name="Doup L.E."/>
            <person name="Downes M."/>
            <person name="Dugan-Rocha S."/>
            <person name="Dunkov B.C."/>
            <person name="Dunn P."/>
            <person name="Durbin K.J."/>
            <person name="Evangelista C.C."/>
            <person name="Ferraz C."/>
            <person name="Ferriera S."/>
            <person name="Fleischmann W."/>
            <person name="Fosler C."/>
            <person name="Gabrielian A.E."/>
            <person name="Garg N.S."/>
            <person name="Gelbart W.M."/>
            <person name="Glasser K."/>
            <person name="Glodek A."/>
            <person name="Gong F."/>
            <person name="Gorrell J.H."/>
            <person name="Gu Z."/>
            <person name="Guan P."/>
            <person name="Harris M."/>
            <person name="Harris N.L."/>
            <person name="Harvey D.A."/>
            <person name="Heiman T.J."/>
            <person name="Hernandez J.R."/>
            <person name="Houck J."/>
            <person name="Hostin D."/>
            <person name="Houston K.A."/>
            <person name="Howland T.J."/>
            <person name="Wei M.-H."/>
            <person name="Ibegwam C."/>
            <person name="Jalali M."/>
            <person name="Kalush F."/>
            <person name="Karpen G.H."/>
            <person name="Ke Z."/>
            <person name="Kennison J.A."/>
            <person name="Ketchum K.A."/>
            <person name="Kimmel B.E."/>
            <person name="Kodira C.D."/>
            <person name="Kraft C.L."/>
            <person name="Kravitz S."/>
            <person name="Kulp D."/>
            <person name="Lai Z."/>
            <person name="Lasko P."/>
            <person name="Lei Y."/>
            <person name="Levitsky A.A."/>
            <person name="Li J.H."/>
            <person name="Li Z."/>
            <person name="Liang Y."/>
            <person name="Lin X."/>
            <person name="Liu X."/>
            <person name="Mattei B."/>
            <person name="McIntosh T.C."/>
            <person name="McLeod M.P."/>
            <person name="McPherson D."/>
            <person name="Merkulov G."/>
            <person name="Milshina N.V."/>
            <person name="Mobarry C."/>
            <person name="Morris J."/>
            <person name="Moshrefi A."/>
            <person name="Mount S.M."/>
            <person name="Moy M."/>
            <person name="Murphy B."/>
            <person name="Murphy L."/>
            <person name="Muzny D.M."/>
            <person name="Nelson D.L."/>
            <person name="Nelson D.R."/>
            <person name="Nelson K.A."/>
            <person name="Nixon K."/>
            <person name="Nusskern D.R."/>
            <person name="Pacleb J.M."/>
            <person name="Palazzolo M."/>
            <person name="Pittman G.S."/>
            <person name="Pan S."/>
            <person name="Pollard J."/>
            <person name="Puri V."/>
            <person name="Reese M.G."/>
            <person name="Reinert K."/>
            <person name="Remington K."/>
            <person name="Saunders R.D.C."/>
            <person name="Scheeler F."/>
            <person name="Shen H."/>
            <person name="Shue B.C."/>
            <person name="Siden-Kiamos I."/>
            <person name="Simpson M."/>
            <person name="Skupski M.P."/>
            <person name="Smith T.J."/>
            <person name="Spier E."/>
            <person name="Spradling A.C."/>
            <person name="Stapleton M."/>
            <person name="Strong R."/>
            <person name="Sun E."/>
            <person name="Svirskas R."/>
            <person name="Tector C."/>
            <person name="Turner R."/>
            <person name="Venter E."/>
            <person name="Wang A.H."/>
            <person name="Wang X."/>
            <person name="Wang Z.-Y."/>
            <person name="Wassarman D.A."/>
            <person name="Weinstock G.M."/>
            <person name="Weissenbach J."/>
            <person name="Williams S.M."/>
            <person name="Woodage T."/>
            <person name="Worley K.C."/>
            <person name="Wu D."/>
            <person name="Yang S."/>
            <person name="Yao Q.A."/>
            <person name="Ye J."/>
            <person name="Yeh R.-F."/>
            <person name="Zaveri J.S."/>
            <person name="Zhan M."/>
            <person name="Zhang G."/>
            <person name="Zhao Q."/>
            <person name="Zheng L."/>
            <person name="Zheng X.H."/>
            <person name="Zhong F.N."/>
            <person name="Zhong W."/>
            <person name="Zhou X."/>
            <person name="Zhu S.C."/>
            <person name="Zhu X."/>
            <person name="Smith H.O."/>
            <person name="Gibbs R.A."/>
            <person name="Myers E.W."/>
            <person name="Rubin G.M."/>
            <person name="Venter J.C."/>
        </authorList>
    </citation>
    <scope>NUCLEOTIDE SEQUENCE [LARGE SCALE GENOMIC DNA]</scope>
    <source>
        <strain>Berkeley</strain>
    </source>
</reference>
<reference key="4">
    <citation type="journal article" date="2002" name="Genome Biol.">
        <title>Annotation of the Drosophila melanogaster euchromatic genome: a systematic review.</title>
        <authorList>
            <person name="Misra S."/>
            <person name="Crosby M.A."/>
            <person name="Mungall C.J."/>
            <person name="Matthews B.B."/>
            <person name="Campbell K.S."/>
            <person name="Hradecky P."/>
            <person name="Huang Y."/>
            <person name="Kaminker J.S."/>
            <person name="Millburn G.H."/>
            <person name="Prochnik S.E."/>
            <person name="Smith C.D."/>
            <person name="Tupy J.L."/>
            <person name="Whitfield E.J."/>
            <person name="Bayraktaroglu L."/>
            <person name="Berman B.P."/>
            <person name="Bettencourt B.R."/>
            <person name="Celniker S.E."/>
            <person name="de Grey A.D.N.J."/>
            <person name="Drysdale R.A."/>
            <person name="Harris N.L."/>
            <person name="Richter J."/>
            <person name="Russo S."/>
            <person name="Schroeder A.J."/>
            <person name="Shu S.Q."/>
            <person name="Stapleton M."/>
            <person name="Yamada C."/>
            <person name="Ashburner M."/>
            <person name="Gelbart W.M."/>
            <person name="Rubin G.M."/>
            <person name="Lewis S.E."/>
        </authorList>
    </citation>
    <scope>GENOME REANNOTATION</scope>
    <scope>ALTERNATIVE SPLICING</scope>
    <source>
        <strain>Berkeley</strain>
    </source>
</reference>
<reference key="5">
    <citation type="journal article" date="1992" name="Cell">
        <title>Twin of I-POU: a two amino acid difference in the I-POU homeodomain distinguishes an activator from an inhibitor of transcription.</title>
        <authorList>
            <person name="Treacy M.N."/>
            <person name="Neilson L.I."/>
            <person name="Turner E.E."/>
            <person name="He X."/>
            <person name="Rosenfeld M.G."/>
        </authorList>
    </citation>
    <scope>NUCLEOTIDE SEQUENCE [GENOMIC DNA] OF 318-327 (ISOFORMS B/C/D)</scope>
    <scope>FUNCTION</scope>
</reference>
<reference key="6">
    <citation type="journal article" date="1996" name="Proc. Natl. Acad. Sci. U.S.A.">
        <title>Similar DNA recognition properties of alternatively spliced Drosophila POU factors.</title>
        <authorList>
            <person name="Turner E.E."/>
        </authorList>
    </citation>
    <scope>DNA-BINDING</scope>
</reference>
<feature type="chain" id="PRO_0000100775" description="Inhibitory POU protein">
    <location>
        <begin position="1"/>
        <end position="396"/>
    </location>
</feature>
<feature type="domain" description="POU-specific" evidence="2">
    <location>
        <begin position="222"/>
        <end position="299"/>
    </location>
</feature>
<feature type="DNA-binding region" description="Homeobox; atypical" evidence="1">
    <location>
        <begin position="320"/>
        <end position="377"/>
    </location>
</feature>
<feature type="region of interest" description="Disordered" evidence="3">
    <location>
        <begin position="302"/>
        <end position="328"/>
    </location>
</feature>
<feature type="short sequence motif" description="POU-IV box">
    <location>
        <begin position="86"/>
        <end position="95"/>
    </location>
</feature>
<feature type="splice variant" id="VSP_018342" description="In isoform B and isoform C." evidence="7">
    <location>
        <begin position="54"/>
        <end position="72"/>
    </location>
</feature>
<feature type="splice variant" id="VSP_018343" description="In isoform C." evidence="7">
    <location>
        <begin position="132"/>
        <end position="138"/>
    </location>
</feature>
<feature type="splice variant" id="VSP_002342" description="In isoform B, isoform C and isoform D." evidence="7">
    <location>
        <begin position="323"/>
        <end position="324"/>
    </location>
</feature>
<feature type="sequence conflict" description="In Ref. 1." evidence="8" ref="1">
    <original>L</original>
    <variation>V</variation>
    <location>
        <position position="166"/>
    </location>
</feature>
<feature type="sequence conflict" description="In Ref. 1." evidence="8" ref="1">
    <original>A</original>
    <variation>P</variation>
    <location>
        <position position="216"/>
    </location>
</feature>
<feature type="sequence conflict" description="In Ref. 1; CAA41342." evidence="8" ref="1">
    <original>L</original>
    <variation>V</variation>
    <location>
        <position position="266"/>
    </location>
</feature>
<dbReference type="EMBL" id="X58436">
    <property type="protein sequence ID" value="CAA41342.1"/>
    <property type="status" value="ALT_FRAME"/>
    <property type="molecule type" value="mRNA"/>
</dbReference>
<dbReference type="EMBL" id="AF086816">
    <property type="protein sequence ID" value="AAC35369.1"/>
    <property type="molecule type" value="mRNA"/>
</dbReference>
<dbReference type="EMBL" id="AE014298">
    <property type="protein sequence ID" value="AAF48447.2"/>
    <property type="molecule type" value="Genomic_DNA"/>
</dbReference>
<dbReference type="EMBL" id="AE014298">
    <property type="protein sequence ID" value="AAN09663.1"/>
    <property type="molecule type" value="Genomic_DNA"/>
</dbReference>
<dbReference type="EMBL" id="AE014298">
    <property type="protein sequence ID" value="AAX52497.1"/>
    <property type="molecule type" value="Genomic_DNA"/>
</dbReference>
<dbReference type="EMBL" id="AE014298">
    <property type="protein sequence ID" value="AAX52498.1"/>
    <property type="molecule type" value="Genomic_DNA"/>
</dbReference>
<dbReference type="EMBL" id="AH003854">
    <property type="protein sequence ID" value="AAB21441.1"/>
    <property type="molecule type" value="Genomic_DNA"/>
</dbReference>
<dbReference type="PIR" id="A42089">
    <property type="entry name" value="A42089"/>
</dbReference>
<dbReference type="PIR" id="S14795">
    <property type="entry name" value="S14795"/>
</dbReference>
<dbReference type="RefSeq" id="NP_001014743.1">
    <molecule id="P24350-4"/>
    <property type="nucleotide sequence ID" value="NM_001014743.3"/>
</dbReference>
<dbReference type="RefSeq" id="NP_001014744.1">
    <molecule id="P24350-1"/>
    <property type="nucleotide sequence ID" value="NM_001014744.2"/>
</dbReference>
<dbReference type="RefSeq" id="NP_524876.1">
    <molecule id="P24350-2"/>
    <property type="nucleotide sequence ID" value="NM_080137.3"/>
</dbReference>
<dbReference type="RefSeq" id="NP_727845.1">
    <molecule id="P24350-3"/>
    <property type="nucleotide sequence ID" value="NM_167438.2"/>
</dbReference>
<dbReference type="SMR" id="P24350"/>
<dbReference type="BioGRID" id="70572">
    <property type="interactions" value="9"/>
</dbReference>
<dbReference type="FunCoup" id="P24350">
    <property type="interactions" value="124"/>
</dbReference>
<dbReference type="STRING" id="7227.FBpp0073832"/>
<dbReference type="GlyGen" id="P24350">
    <property type="glycosylation" value="1 site"/>
</dbReference>
<dbReference type="PaxDb" id="7227-FBpp0073832"/>
<dbReference type="DNASU" id="47080"/>
<dbReference type="EnsemblMetazoa" id="FBtr0074015">
    <molecule id="P24350-2"/>
    <property type="protein sequence ID" value="FBpp0073832"/>
    <property type="gene ID" value="FBgn0000028"/>
</dbReference>
<dbReference type="EnsemblMetazoa" id="FBtr0100326">
    <molecule id="P24350-1"/>
    <property type="protein sequence ID" value="FBpp0099732"/>
    <property type="gene ID" value="FBgn0000028"/>
</dbReference>
<dbReference type="EnsemblMetazoa" id="FBtr0100328">
    <molecule id="P24350-4"/>
    <property type="protein sequence ID" value="FBpp0099734"/>
    <property type="gene ID" value="FBgn0000028"/>
</dbReference>
<dbReference type="EnsemblMetazoa" id="FBtr0290063">
    <molecule id="P24350-3"/>
    <property type="protein sequence ID" value="FBpp0288502"/>
    <property type="gene ID" value="FBgn0000028"/>
</dbReference>
<dbReference type="GeneID" id="47080"/>
<dbReference type="KEGG" id="dme:Dmel_CG9151"/>
<dbReference type="AGR" id="FB:FBgn0000028"/>
<dbReference type="CTD" id="47080"/>
<dbReference type="FlyBase" id="FBgn0000028">
    <property type="gene designation" value="acj6"/>
</dbReference>
<dbReference type="VEuPathDB" id="VectorBase:FBgn0000028"/>
<dbReference type="eggNOG" id="KOG1168">
    <property type="taxonomic scope" value="Eukaryota"/>
</dbReference>
<dbReference type="GeneTree" id="ENSGT00940000169264"/>
<dbReference type="InParanoid" id="P24350"/>
<dbReference type="OMA" id="MNMHAHG"/>
<dbReference type="OrthoDB" id="6358449at2759"/>
<dbReference type="PhylomeDB" id="P24350"/>
<dbReference type="Reactome" id="R-DME-6804759">
    <property type="pathway name" value="Regulation of TP53 Activity through Association with Co-factors"/>
</dbReference>
<dbReference type="BioGRID-ORCS" id="47080">
    <property type="hits" value="0 hits in 3 CRISPR screens"/>
</dbReference>
<dbReference type="ChiTaRS" id="acj6">
    <property type="organism name" value="fly"/>
</dbReference>
<dbReference type="GenomeRNAi" id="47080"/>
<dbReference type="PRO" id="PR:P24350"/>
<dbReference type="Proteomes" id="UP000000803">
    <property type="component" value="Chromosome X"/>
</dbReference>
<dbReference type="Bgee" id="FBgn0000028">
    <property type="expression patterns" value="Expressed in adult olfactory receptor neuron Or92a (Drosophila) in antenna and 137 other cell types or tissues"/>
</dbReference>
<dbReference type="ExpressionAtlas" id="P24350">
    <property type="expression patterns" value="baseline and differential"/>
</dbReference>
<dbReference type="GO" id="GO:0005634">
    <property type="term" value="C:nucleus"/>
    <property type="evidence" value="ECO:0000250"/>
    <property type="project" value="FlyBase"/>
</dbReference>
<dbReference type="GO" id="GO:0003700">
    <property type="term" value="F:DNA-binding transcription factor activity"/>
    <property type="evidence" value="ECO:0000314"/>
    <property type="project" value="FlyBase"/>
</dbReference>
<dbReference type="GO" id="GO:0000981">
    <property type="term" value="F:DNA-binding transcription factor activity, RNA polymerase II-specific"/>
    <property type="evidence" value="ECO:0000318"/>
    <property type="project" value="GO_Central"/>
</dbReference>
<dbReference type="GO" id="GO:0000978">
    <property type="term" value="F:RNA polymerase II cis-regulatory region sequence-specific DNA binding"/>
    <property type="evidence" value="ECO:0000318"/>
    <property type="project" value="GO_Central"/>
</dbReference>
<dbReference type="GO" id="GO:0003714">
    <property type="term" value="F:transcription corepressor activity"/>
    <property type="evidence" value="ECO:0000316"/>
    <property type="project" value="FlyBase"/>
</dbReference>
<dbReference type="GO" id="GO:0007411">
    <property type="term" value="P:axon guidance"/>
    <property type="evidence" value="ECO:0000315"/>
    <property type="project" value="FlyBase"/>
</dbReference>
<dbReference type="GO" id="GO:0007636">
    <property type="term" value="P:chemosensory jump behavior"/>
    <property type="evidence" value="ECO:0000315"/>
    <property type="project" value="FlyBase"/>
</dbReference>
<dbReference type="GO" id="GO:0070983">
    <property type="term" value="P:dendrite guidance"/>
    <property type="evidence" value="ECO:0000315"/>
    <property type="project" value="FlyBase"/>
</dbReference>
<dbReference type="GO" id="GO:0048813">
    <property type="term" value="P:dendrite morphogenesis"/>
    <property type="evidence" value="ECO:0000315"/>
    <property type="project" value="FlyBase"/>
</dbReference>
<dbReference type="GO" id="GO:0050911">
    <property type="term" value="P:detection of chemical stimulus involved in sensory perception of smell"/>
    <property type="evidence" value="ECO:0000314"/>
    <property type="project" value="FlyBase"/>
</dbReference>
<dbReference type="GO" id="GO:0045944">
    <property type="term" value="P:positive regulation of transcription by RNA polymerase II"/>
    <property type="evidence" value="ECO:0000314"/>
    <property type="project" value="FlyBase"/>
</dbReference>
<dbReference type="GO" id="GO:0006357">
    <property type="term" value="P:regulation of transcription by RNA polymerase II"/>
    <property type="evidence" value="ECO:0000318"/>
    <property type="project" value="GO_Central"/>
</dbReference>
<dbReference type="GO" id="GO:0008039">
    <property type="term" value="P:synaptic target recognition"/>
    <property type="evidence" value="ECO:0000315"/>
    <property type="project" value="FlyBase"/>
</dbReference>
<dbReference type="CDD" id="cd00086">
    <property type="entry name" value="homeodomain"/>
    <property type="match status" value="1"/>
</dbReference>
<dbReference type="FunFam" id="1.10.10.60:FF:000230">
    <property type="entry name" value="POU domain protein"/>
    <property type="match status" value="1"/>
</dbReference>
<dbReference type="FunFam" id="1.10.260.40:FF:000007">
    <property type="entry name" value="POU domain protein"/>
    <property type="match status" value="1"/>
</dbReference>
<dbReference type="Gene3D" id="1.10.10.60">
    <property type="entry name" value="Homeodomain-like"/>
    <property type="match status" value="1"/>
</dbReference>
<dbReference type="Gene3D" id="1.10.260.40">
    <property type="entry name" value="lambda repressor-like DNA-binding domains"/>
    <property type="match status" value="1"/>
</dbReference>
<dbReference type="InterPro" id="IPR001356">
    <property type="entry name" value="HD"/>
</dbReference>
<dbReference type="InterPro" id="IPR017970">
    <property type="entry name" value="Homeobox_CS"/>
</dbReference>
<dbReference type="InterPro" id="IPR009057">
    <property type="entry name" value="Homeodomain-like_sf"/>
</dbReference>
<dbReference type="InterPro" id="IPR010982">
    <property type="entry name" value="Lambda_DNA-bd_dom_sf"/>
</dbReference>
<dbReference type="InterPro" id="IPR013847">
    <property type="entry name" value="POU"/>
</dbReference>
<dbReference type="InterPro" id="IPR000327">
    <property type="entry name" value="POU_dom"/>
</dbReference>
<dbReference type="InterPro" id="IPR050255">
    <property type="entry name" value="POU_domain_TF"/>
</dbReference>
<dbReference type="PANTHER" id="PTHR11636:SF70">
    <property type="entry name" value="INHIBITORY POU PROTEIN"/>
    <property type="match status" value="1"/>
</dbReference>
<dbReference type="PANTHER" id="PTHR11636">
    <property type="entry name" value="POU DOMAIN"/>
    <property type="match status" value="1"/>
</dbReference>
<dbReference type="Pfam" id="PF00046">
    <property type="entry name" value="Homeodomain"/>
    <property type="match status" value="1"/>
</dbReference>
<dbReference type="Pfam" id="PF00157">
    <property type="entry name" value="Pou"/>
    <property type="match status" value="1"/>
</dbReference>
<dbReference type="PRINTS" id="PR00028">
    <property type="entry name" value="POUDOMAIN"/>
</dbReference>
<dbReference type="SMART" id="SM00389">
    <property type="entry name" value="HOX"/>
    <property type="match status" value="1"/>
</dbReference>
<dbReference type="SMART" id="SM00352">
    <property type="entry name" value="POU"/>
    <property type="match status" value="1"/>
</dbReference>
<dbReference type="SUPFAM" id="SSF46689">
    <property type="entry name" value="Homeodomain-like"/>
    <property type="match status" value="1"/>
</dbReference>
<dbReference type="SUPFAM" id="SSF47413">
    <property type="entry name" value="lambda repressor-like DNA-binding domains"/>
    <property type="match status" value="1"/>
</dbReference>
<dbReference type="PROSITE" id="PS00027">
    <property type="entry name" value="HOMEOBOX_1"/>
    <property type="match status" value="1"/>
</dbReference>
<dbReference type="PROSITE" id="PS50071">
    <property type="entry name" value="HOMEOBOX_2"/>
    <property type="match status" value="1"/>
</dbReference>
<dbReference type="PROSITE" id="PS00035">
    <property type="entry name" value="POU_1"/>
    <property type="match status" value="1"/>
</dbReference>
<dbReference type="PROSITE" id="PS00465">
    <property type="entry name" value="POU_2"/>
    <property type="match status" value="1"/>
</dbReference>
<dbReference type="PROSITE" id="PS51179">
    <property type="entry name" value="POU_3"/>
    <property type="match status" value="1"/>
</dbReference>
<organism>
    <name type="scientific">Drosophila melanogaster</name>
    <name type="common">Fruit fly</name>
    <dbReference type="NCBI Taxonomy" id="7227"/>
    <lineage>
        <taxon>Eukaryota</taxon>
        <taxon>Metazoa</taxon>
        <taxon>Ecdysozoa</taxon>
        <taxon>Arthropoda</taxon>
        <taxon>Hexapoda</taxon>
        <taxon>Insecta</taxon>
        <taxon>Pterygota</taxon>
        <taxon>Neoptera</taxon>
        <taxon>Endopterygota</taxon>
        <taxon>Diptera</taxon>
        <taxon>Brachycera</taxon>
        <taxon>Muscomorpha</taxon>
        <taxon>Ephydroidea</taxon>
        <taxon>Drosophilidae</taxon>
        <taxon>Drosophila</taxon>
        <taxon>Sophophora</taxon>
    </lineage>
</organism>
<proteinExistence type="evidence at protein level"/>
<gene>
    <name type="primary">acj6</name>
    <name type="synonym">Ipou</name>
    <name type="ORF">CG9151</name>
</gene>
<name>IPOU_DROME</name>
<accession>P24350</accession>
<accession>O77214</accession>
<accession>Q26465</accession>
<accession>Q59E44</accession>
<accession>Q59E45</accession>
<accession>Q8IR36</accession>
<accession>Q9VXW1</accession>
<evidence type="ECO:0000255" key="1">
    <source>
        <dbReference type="PROSITE-ProRule" id="PRU00108"/>
    </source>
</evidence>
<evidence type="ECO:0000255" key="2">
    <source>
        <dbReference type="PROSITE-ProRule" id="PRU00530"/>
    </source>
</evidence>
<evidence type="ECO:0000256" key="3">
    <source>
        <dbReference type="SAM" id="MobiDB-lite"/>
    </source>
</evidence>
<evidence type="ECO:0000269" key="4">
    <source>
    </source>
</evidence>
<evidence type="ECO:0000269" key="5">
    <source>
    </source>
</evidence>
<evidence type="ECO:0000269" key="6">
    <source>
    </source>
</evidence>
<evidence type="ECO:0000303" key="7">
    <source>
    </source>
</evidence>
<evidence type="ECO:0000305" key="8"/>
<evidence type="ECO:0000305" key="9">
    <source>
    </source>
</evidence>
<keyword id="KW-0010">Activator</keyword>
<keyword id="KW-0025">Alternative splicing</keyword>
<keyword id="KW-0238">DNA-binding</keyword>
<keyword id="KW-0371">Homeobox</keyword>
<keyword id="KW-0539">Nucleus</keyword>
<keyword id="KW-0552">Olfaction</keyword>
<keyword id="KW-1185">Reference proteome</keyword>
<keyword id="KW-0678">Repressor</keyword>
<keyword id="KW-0716">Sensory transduction</keyword>
<keyword id="KW-0804">Transcription</keyword>
<keyword id="KW-0805">Transcription regulation</keyword>
<comment type="function">
    <text evidence="4 5">Modulates gene transcription; simultaneously generates both a specific activator and an inhibitor of gene transcription, capable of modulating two distinct regulatory programs during neural development. Has a role in olfactory behavior.</text>
</comment>
<comment type="subcellular location">
    <subcellularLocation>
        <location>Nucleus</location>
    </subcellularLocation>
</comment>
<comment type="alternative products">
    <event type="alternative splicing"/>
    <isoform>
        <id>P24350-2</id>
        <name>A</name>
        <name>TI-POU</name>
        <name>Twin-of-I-POU</name>
        <sequence type="displayed"/>
    </isoform>
    <isoform>
        <id>P24350-1</id>
        <name>C</name>
        <name>I-POU</name>
        <sequence type="described" ref="VSP_018342 VSP_018343 VSP_002342"/>
    </isoform>
    <isoform>
        <id>P24350-3</id>
        <name>B</name>
        <sequence type="described" ref="VSP_018342 VSP_002342"/>
    </isoform>
    <isoform>
        <id>P24350-4</id>
        <name>D</name>
        <sequence type="described" ref="VSP_002342"/>
    </isoform>
</comment>
<comment type="tissue specificity">
    <text evidence="4 6">Coexpressed with vvl in overlapping subsets of neurons in the embryonic central nervous system. Expressed in olfactory neurons.</text>
</comment>
<comment type="similarity">
    <text evidence="8">Belongs to the POU transcription factor family. Class-4 subfamily.</text>
</comment>
<comment type="caution">
    <text evidence="9">Was originally thought that the I-POU homeobox is unable to bind DNA because it lacks two N-terminal basic residues.</text>
</comment>
<comment type="caution">
    <text evidence="9">Was originally thought to interact with vvl.</text>
</comment>
<comment type="sequence caution" evidence="8">
    <conflict type="frameshift">
        <sequence resource="EMBL-CDS" id="CAA41342"/>
    </conflict>
</comment>
<sequence length="396" mass="43704">MTMSMYSTTDKMKMSAPSCFPGRYSPSYRSSEQMRRCMPNPSIHISSSCDSLESRLLEDASLLCNSWSARQNGDIFAGINDGILSRAEALAAVDIQKHQAQHVHSQMPSQIKHDVMYHHHSMSGPPQRPLQENPFSRQMHHSMDQLDMLDPTGSMTTLAPISESPLTPTHQHLHGSYHSMNHMMSHHHPGTLSGHTGGHHGHSAVHHPVITAAVAAAGLHPDTDTDPRELEAFAERFKQRRIKLGVTQADVGKALANLKLPGVGALSQSTICRFESLTLSHNNMIALKPILQAWLEEAEAQAKNKRRDPDAPSVLPAGEKKRKRTSIAAPEKRSLEAYFAVQPRPSGEKIAAIAEKLDLKKNVVRVWFCNQRQKQKRIVSSVTPSMTGHGSAGFGY</sequence>